<sequence length="260" mass="28312">MPRFAANLSMMYNEHAFLDRFAAAAADGFRAVEFLFPYEHAAAELRARLDANGLTQALFNAAPGDWAAGERGLAALPGREADFRGTIGRALEYAGVIGNDRIHVMAGLIPADADRARCRATYLENLAFAANAAAAQGVTVLIEPINTRDMPGYFLNRQDDGQAICKEVGAANLKVQFDCYHCQIVEGDVAMKLKRDIAGIGHIQIAGVPERHEPDVGELNYPYLFEVMDTLGYDGWIGCEYRPRAGTSAGLGWLKPYLGR</sequence>
<gene>
    <name evidence="4" type="primary">otnI</name>
    <name evidence="6" type="synonym">hyi1</name>
    <name evidence="6" type="ordered locus">H16_A1558</name>
</gene>
<organism>
    <name type="scientific">Cupriavidus necator (strain ATCC 17699 / DSM 428 / KCTC 22496 / NCIMB 10442 / H16 / Stanier 337)</name>
    <name type="common">Ralstonia eutropha</name>
    <dbReference type="NCBI Taxonomy" id="381666"/>
    <lineage>
        <taxon>Bacteria</taxon>
        <taxon>Pseudomonadati</taxon>
        <taxon>Pseudomonadota</taxon>
        <taxon>Betaproteobacteria</taxon>
        <taxon>Burkholderiales</taxon>
        <taxon>Burkholderiaceae</taxon>
        <taxon>Cupriavidus</taxon>
    </lineage>
</organism>
<evidence type="ECO:0000250" key="1">
    <source>
        <dbReference type="UniProtKB" id="Q46891"/>
    </source>
</evidence>
<evidence type="ECO:0000250" key="2">
    <source>
        <dbReference type="UniProtKB" id="Q9WYP7"/>
    </source>
</evidence>
<evidence type="ECO:0000269" key="3">
    <source>
    </source>
</evidence>
<evidence type="ECO:0000303" key="4">
    <source>
    </source>
</evidence>
<evidence type="ECO:0000305" key="5"/>
<evidence type="ECO:0000312" key="6">
    <source>
        <dbReference type="EMBL" id="CAJ92690.1"/>
    </source>
</evidence>
<feature type="chain" id="PRO_0000439753" description="2-oxo-tetronate isomerase">
    <location>
        <begin position="1"/>
        <end position="260"/>
    </location>
</feature>
<feature type="active site" description="Proton donor/acceptor" evidence="2">
    <location>
        <position position="143"/>
    </location>
</feature>
<feature type="active site" description="Proton donor/acceptor" evidence="2">
    <location>
        <position position="240"/>
    </location>
</feature>
<feature type="binding site" evidence="1">
    <location>
        <position position="143"/>
    </location>
    <ligand>
        <name>Mg(2+)</name>
        <dbReference type="ChEBI" id="CHEBI:18420"/>
    </ligand>
</feature>
<feature type="binding site" evidence="1">
    <location>
        <position position="178"/>
    </location>
    <ligand>
        <name>Mg(2+)</name>
        <dbReference type="ChEBI" id="CHEBI:18420"/>
    </ligand>
</feature>
<feature type="binding site" evidence="1">
    <location>
        <position position="204"/>
    </location>
    <ligand>
        <name>Mg(2+)</name>
        <dbReference type="ChEBI" id="CHEBI:18420"/>
    </ligand>
</feature>
<feature type="binding site" evidence="1">
    <location>
        <position position="240"/>
    </location>
    <ligand>
        <name>Mg(2+)</name>
        <dbReference type="ChEBI" id="CHEBI:18420"/>
    </ligand>
</feature>
<protein>
    <recommendedName>
        <fullName evidence="4">2-oxo-tetronate isomerase</fullName>
        <ecNumber evidence="3">5.3.1.35</ecNumber>
    </recommendedName>
    <alternativeName>
        <fullName evidence="5">2-dehydrotetronate isomerase</fullName>
    </alternativeName>
</protein>
<name>OTNI_CUPNH</name>
<dbReference type="EC" id="5.3.1.35" evidence="3"/>
<dbReference type="EMBL" id="AM260479">
    <property type="protein sequence ID" value="CAJ92690.1"/>
    <property type="molecule type" value="Genomic_DNA"/>
</dbReference>
<dbReference type="RefSeq" id="WP_010810014.1">
    <property type="nucleotide sequence ID" value="NZ_CP039287.1"/>
</dbReference>
<dbReference type="SMR" id="Q0KBD1"/>
<dbReference type="STRING" id="381666.H16_A1558"/>
<dbReference type="KEGG" id="reh:H16_A1558"/>
<dbReference type="PATRIC" id="fig|381666.6.peg.1943"/>
<dbReference type="eggNOG" id="COG3622">
    <property type="taxonomic scope" value="Bacteria"/>
</dbReference>
<dbReference type="HOGENOM" id="CLU_050006_1_2_4"/>
<dbReference type="OrthoDB" id="9786584at2"/>
<dbReference type="Proteomes" id="UP000008210">
    <property type="component" value="Chromosome 1"/>
</dbReference>
<dbReference type="GO" id="GO:0008903">
    <property type="term" value="F:hydroxypyruvate isomerase activity"/>
    <property type="evidence" value="ECO:0007669"/>
    <property type="project" value="TreeGrafter"/>
</dbReference>
<dbReference type="GO" id="GO:0046872">
    <property type="term" value="F:metal ion binding"/>
    <property type="evidence" value="ECO:0007669"/>
    <property type="project" value="UniProtKB-KW"/>
</dbReference>
<dbReference type="GO" id="GO:0046487">
    <property type="term" value="P:glyoxylate metabolic process"/>
    <property type="evidence" value="ECO:0007669"/>
    <property type="project" value="TreeGrafter"/>
</dbReference>
<dbReference type="FunFam" id="3.20.20.150:FF:000007">
    <property type="entry name" value="Hydroxypyruvate isomerase"/>
    <property type="match status" value="1"/>
</dbReference>
<dbReference type="Gene3D" id="3.20.20.150">
    <property type="entry name" value="Divalent-metal-dependent TIM barrel enzymes"/>
    <property type="match status" value="1"/>
</dbReference>
<dbReference type="InterPro" id="IPR053398">
    <property type="entry name" value="HPT_OtnI_isomerases"/>
</dbReference>
<dbReference type="InterPro" id="IPR026040">
    <property type="entry name" value="HyI-like"/>
</dbReference>
<dbReference type="InterPro" id="IPR050417">
    <property type="entry name" value="Sugar_Epim/Isomerase"/>
</dbReference>
<dbReference type="InterPro" id="IPR036237">
    <property type="entry name" value="Xyl_isomerase-like_sf"/>
</dbReference>
<dbReference type="InterPro" id="IPR013022">
    <property type="entry name" value="Xyl_isomerase-like_TIM-brl"/>
</dbReference>
<dbReference type="NCBIfam" id="NF043033">
    <property type="entry name" value="OxoTetrIsom"/>
    <property type="match status" value="1"/>
</dbReference>
<dbReference type="PANTHER" id="PTHR43489:SF13">
    <property type="entry name" value="HYDROXYPYRUVATE ISOMERASE"/>
    <property type="match status" value="1"/>
</dbReference>
<dbReference type="PANTHER" id="PTHR43489">
    <property type="entry name" value="ISOMERASE"/>
    <property type="match status" value="1"/>
</dbReference>
<dbReference type="Pfam" id="PF01261">
    <property type="entry name" value="AP_endonuc_2"/>
    <property type="match status" value="1"/>
</dbReference>
<dbReference type="PIRSF" id="PIRSF006241">
    <property type="entry name" value="HyI"/>
    <property type="match status" value="1"/>
</dbReference>
<dbReference type="SUPFAM" id="SSF51658">
    <property type="entry name" value="Xylose isomerase-like"/>
    <property type="match status" value="1"/>
</dbReference>
<accession>Q0KBD1</accession>
<reference key="1">
    <citation type="journal article" date="2006" name="Nat. Biotechnol.">
        <title>Genome sequence of the bioplastic-producing 'Knallgas' bacterium Ralstonia eutropha H16.</title>
        <authorList>
            <person name="Pohlmann A."/>
            <person name="Fricke W.F."/>
            <person name="Reinecke F."/>
            <person name="Kusian B."/>
            <person name="Liesegang H."/>
            <person name="Cramm R."/>
            <person name="Eitinger T."/>
            <person name="Ewering C."/>
            <person name="Poetter M."/>
            <person name="Schwartz E."/>
            <person name="Strittmatter A."/>
            <person name="Voss I."/>
            <person name="Gottschalk G."/>
            <person name="Steinbuechel A."/>
            <person name="Friedrich B."/>
            <person name="Bowien B."/>
        </authorList>
    </citation>
    <scope>NUCLEOTIDE SEQUENCE [LARGE SCALE GENOMIC DNA]</scope>
    <source>
        <strain>ATCC 17699 / DSM 428 / KCTC 22496 / NCIMB 10442 / H16 / Stanier 337</strain>
    </source>
</reference>
<reference key="2">
    <citation type="journal article" date="2016" name="Proc. Natl. Acad. Sci. U.S.A.">
        <title>Assignment of function to a domain of unknown function: DUF1537 is a new kinase family in catabolic pathways for acid sugars.</title>
        <authorList>
            <person name="Zhang X."/>
            <person name="Carter M.S."/>
            <person name="Vetting M.W."/>
            <person name="San Francisco B."/>
            <person name="Zhao S."/>
            <person name="Al-Obaidi N.F."/>
            <person name="Solbiati J.O."/>
            <person name="Thiaville J.J."/>
            <person name="de Crecy-Lagard V."/>
            <person name="Jacobson M.P."/>
            <person name="Almo S.C."/>
            <person name="Gerlt J.A."/>
        </authorList>
    </citation>
    <scope>FUNCTION</scope>
    <scope>CATALYTIC ACTIVITY</scope>
    <scope>DISRUPTION PHENOTYPE</scope>
    <source>
        <strain>ATCC 17699 / DSM 428 / KCTC 22496 / NCIMB 10442 / H16 / Stanier 337</strain>
    </source>
</reference>
<comment type="function">
    <text evidence="3">Catalyzes the isomerization of 2-oxo-tetronate to 3-oxo-tetronate.</text>
</comment>
<comment type="catalytic activity">
    <reaction evidence="3">
        <text>2-dehydro-L-erythronate = 3-dehydro-L-erythronate</text>
        <dbReference type="Rhea" id="RHEA:52564"/>
        <dbReference type="ChEBI" id="CHEBI:136669"/>
        <dbReference type="ChEBI" id="CHEBI:136670"/>
        <dbReference type="EC" id="5.3.1.35"/>
    </reaction>
</comment>
<comment type="catalytic activity">
    <reaction evidence="3">
        <text>2-dehydro-D-erythronate = 3-dehydro-D-erythronate</text>
        <dbReference type="Rhea" id="RHEA:52560"/>
        <dbReference type="ChEBI" id="CHEBI:57958"/>
        <dbReference type="ChEBI" id="CHEBI:136668"/>
        <dbReference type="EC" id="5.3.1.35"/>
    </reaction>
</comment>
<comment type="disruption phenotype">
    <text evidence="3">Deletion decreases growth with L-threonate or D-erythronate as carbon source. Deletion of both otnI and hyi abolishes growth with L-threonate or D-erythronate.</text>
</comment>
<comment type="similarity">
    <text evidence="5">Belongs to the hyi family. OtnI subfamily.</text>
</comment>
<proteinExistence type="evidence at protein level"/>
<keyword id="KW-0119">Carbohydrate metabolism</keyword>
<keyword id="KW-0413">Isomerase</keyword>
<keyword id="KW-0460">Magnesium</keyword>
<keyword id="KW-0479">Metal-binding</keyword>
<keyword id="KW-1185">Reference proteome</keyword>